<dbReference type="EMBL" id="AP008231">
    <property type="protein sequence ID" value="BAD79991.1"/>
    <property type="status" value="ALT_INIT"/>
    <property type="molecule type" value="Genomic_DNA"/>
</dbReference>
<dbReference type="RefSeq" id="WP_011244111.1">
    <property type="nucleotide sequence ID" value="NZ_CP085785.1"/>
</dbReference>
<dbReference type="SMR" id="Q5N129"/>
<dbReference type="GeneID" id="72431185"/>
<dbReference type="KEGG" id="syc:syc1801_c"/>
<dbReference type="eggNOG" id="COG0184">
    <property type="taxonomic scope" value="Bacteria"/>
</dbReference>
<dbReference type="Proteomes" id="UP000001175">
    <property type="component" value="Chromosome"/>
</dbReference>
<dbReference type="GO" id="GO:0022627">
    <property type="term" value="C:cytosolic small ribosomal subunit"/>
    <property type="evidence" value="ECO:0007669"/>
    <property type="project" value="TreeGrafter"/>
</dbReference>
<dbReference type="GO" id="GO:0019843">
    <property type="term" value="F:rRNA binding"/>
    <property type="evidence" value="ECO:0007669"/>
    <property type="project" value="UniProtKB-UniRule"/>
</dbReference>
<dbReference type="GO" id="GO:0003735">
    <property type="term" value="F:structural constituent of ribosome"/>
    <property type="evidence" value="ECO:0007669"/>
    <property type="project" value="InterPro"/>
</dbReference>
<dbReference type="GO" id="GO:0006412">
    <property type="term" value="P:translation"/>
    <property type="evidence" value="ECO:0007669"/>
    <property type="project" value="UniProtKB-UniRule"/>
</dbReference>
<dbReference type="CDD" id="cd00353">
    <property type="entry name" value="Ribosomal_S15p_S13e"/>
    <property type="match status" value="1"/>
</dbReference>
<dbReference type="FunFam" id="1.10.287.10:FF:000002">
    <property type="entry name" value="30S ribosomal protein S15"/>
    <property type="match status" value="1"/>
</dbReference>
<dbReference type="Gene3D" id="6.10.250.3130">
    <property type="match status" value="1"/>
</dbReference>
<dbReference type="Gene3D" id="1.10.287.10">
    <property type="entry name" value="S15/NS1, RNA-binding"/>
    <property type="match status" value="1"/>
</dbReference>
<dbReference type="HAMAP" id="MF_01343_B">
    <property type="entry name" value="Ribosomal_uS15_B"/>
    <property type="match status" value="1"/>
</dbReference>
<dbReference type="InterPro" id="IPR000589">
    <property type="entry name" value="Ribosomal_uS15"/>
</dbReference>
<dbReference type="InterPro" id="IPR005290">
    <property type="entry name" value="Ribosomal_uS15_bac-type"/>
</dbReference>
<dbReference type="InterPro" id="IPR009068">
    <property type="entry name" value="uS15_NS1_RNA-bd_sf"/>
</dbReference>
<dbReference type="NCBIfam" id="TIGR00952">
    <property type="entry name" value="S15_bact"/>
    <property type="match status" value="1"/>
</dbReference>
<dbReference type="PANTHER" id="PTHR23321">
    <property type="entry name" value="RIBOSOMAL PROTEIN S15, BACTERIAL AND ORGANELLAR"/>
    <property type="match status" value="1"/>
</dbReference>
<dbReference type="PANTHER" id="PTHR23321:SF26">
    <property type="entry name" value="SMALL RIBOSOMAL SUBUNIT PROTEIN US15M"/>
    <property type="match status" value="1"/>
</dbReference>
<dbReference type="Pfam" id="PF00312">
    <property type="entry name" value="Ribosomal_S15"/>
    <property type="match status" value="1"/>
</dbReference>
<dbReference type="SMART" id="SM01387">
    <property type="entry name" value="Ribosomal_S15"/>
    <property type="match status" value="1"/>
</dbReference>
<dbReference type="SUPFAM" id="SSF47060">
    <property type="entry name" value="S15/NS1 RNA-binding domain"/>
    <property type="match status" value="1"/>
</dbReference>
<dbReference type="PROSITE" id="PS00362">
    <property type="entry name" value="RIBOSOMAL_S15"/>
    <property type="match status" value="1"/>
</dbReference>
<protein>
    <recommendedName>
        <fullName evidence="1">Small ribosomal subunit protein uS15</fullName>
    </recommendedName>
    <alternativeName>
        <fullName evidence="2">30S ribosomal protein S15</fullName>
    </alternativeName>
</protein>
<proteinExistence type="inferred from homology"/>
<accession>Q5N129</accession>
<keyword id="KW-0687">Ribonucleoprotein</keyword>
<keyword id="KW-0689">Ribosomal protein</keyword>
<keyword id="KW-0694">RNA-binding</keyword>
<keyword id="KW-0699">rRNA-binding</keyword>
<comment type="function">
    <text evidence="1">One of the primary rRNA binding proteins, it binds directly to 16S rRNA where it helps nucleate assembly of the platform of the 30S subunit by binding and bridging several RNA helices of the 16S rRNA.</text>
</comment>
<comment type="function">
    <text evidence="1">Forms an intersubunit bridge (bridge B4) with the 23S rRNA of the 50S subunit in the ribosome.</text>
</comment>
<comment type="subunit">
    <text evidence="1">Part of the 30S ribosomal subunit. Forms a bridge to the 50S subunit in the 70S ribosome, contacting the 23S rRNA.</text>
</comment>
<comment type="similarity">
    <text evidence="1">Belongs to the universal ribosomal protein uS15 family.</text>
</comment>
<comment type="sequence caution" evidence="2">
    <conflict type="erroneous initiation">
        <sequence resource="EMBL-CDS" id="BAD79991"/>
    </conflict>
</comment>
<evidence type="ECO:0000255" key="1">
    <source>
        <dbReference type="HAMAP-Rule" id="MF_01343"/>
    </source>
</evidence>
<evidence type="ECO:0000305" key="2"/>
<sequence>MSLTQARKQEIFEAYQIHPTDTGSADVQVAVLSERISRLSQHLQQNKKDFASRTGLLRLIGQRKRLLAYILKQDRDRYKALIERLGIRG</sequence>
<gene>
    <name evidence="1" type="primary">rpsO</name>
    <name evidence="1" type="synonym">rps15</name>
    <name type="ordered locus">syc1801_c</name>
</gene>
<organism>
    <name type="scientific">Synechococcus sp. (strain ATCC 27144 / PCC 6301 / SAUG 1402/1)</name>
    <name type="common">Anacystis nidulans</name>
    <dbReference type="NCBI Taxonomy" id="269084"/>
    <lineage>
        <taxon>Bacteria</taxon>
        <taxon>Bacillati</taxon>
        <taxon>Cyanobacteriota</taxon>
        <taxon>Cyanophyceae</taxon>
        <taxon>Synechococcales</taxon>
        <taxon>Synechococcaceae</taxon>
        <taxon>Synechococcus</taxon>
    </lineage>
</organism>
<reference key="1">
    <citation type="journal article" date="2007" name="Photosyn. Res.">
        <title>Complete nucleotide sequence of the freshwater unicellular cyanobacterium Synechococcus elongatus PCC 6301 chromosome: gene content and organization.</title>
        <authorList>
            <person name="Sugita C."/>
            <person name="Ogata K."/>
            <person name="Shikata M."/>
            <person name="Jikuya H."/>
            <person name="Takano J."/>
            <person name="Furumichi M."/>
            <person name="Kanehisa M."/>
            <person name="Omata T."/>
            <person name="Sugiura M."/>
            <person name="Sugita M."/>
        </authorList>
    </citation>
    <scope>NUCLEOTIDE SEQUENCE [LARGE SCALE GENOMIC DNA]</scope>
    <source>
        <strain>ATCC 27144 / PCC 6301 / SAUG 1402/1</strain>
    </source>
</reference>
<name>RS15_SYNP6</name>
<feature type="chain" id="PRO_0000115566" description="Small ribosomal subunit protein uS15">
    <location>
        <begin position="1"/>
        <end position="89"/>
    </location>
</feature>